<name>Y1482_MYCBP</name>
<organism>
    <name type="scientific">Mycobacterium bovis (strain BCG / Pasteur 1173P2)</name>
    <dbReference type="NCBI Taxonomy" id="410289"/>
    <lineage>
        <taxon>Bacteria</taxon>
        <taxon>Bacillati</taxon>
        <taxon>Actinomycetota</taxon>
        <taxon>Actinomycetes</taxon>
        <taxon>Mycobacteriales</taxon>
        <taxon>Mycobacteriaceae</taxon>
        <taxon>Mycobacterium</taxon>
        <taxon>Mycobacterium tuberculosis complex</taxon>
    </lineage>
</organism>
<sequence length="301" mass="32912">MMNHARGVENRSEGGGIDVVLVTGLSGAGRGTAAKVLEDLGWYVADNLPPQLITRMVDFGLAAGSRITQLAVVMDVRSRGFTGDLDSVRNELATRAITPRVVFMEASDDTLVRRYEQNRRSHPLQGEQTLAEGIAAERRMLAPVRATADLIIDTSTLSVGGLRDSIERAFGGDGGATTSVTVESFGFKYGLPMDADMVMDVRFLPNPHWVDELRPLTGQHPAVRDYVLHRPGAAEFLESYHRLLSLVVDGYRREGKRYMTIAIGCTGGKHRSVAIAEALMGLLRSDQQLSVRALHRDLGRE</sequence>
<accession>A1KIL0</accession>
<comment type="function">
    <text evidence="1">Displays ATPase and GTPase activities.</text>
</comment>
<comment type="similarity">
    <text evidence="1">Belongs to the RapZ-like family.</text>
</comment>
<keyword id="KW-0067">ATP-binding</keyword>
<keyword id="KW-0342">GTP-binding</keyword>
<keyword id="KW-0547">Nucleotide-binding</keyword>
<evidence type="ECO:0000255" key="1">
    <source>
        <dbReference type="HAMAP-Rule" id="MF_00636"/>
    </source>
</evidence>
<protein>
    <recommendedName>
        <fullName evidence="1">Nucleotide-binding protein BCG_1482</fullName>
    </recommendedName>
</protein>
<feature type="chain" id="PRO_1000056836" description="Nucleotide-binding protein BCG_1482">
    <location>
        <begin position="1"/>
        <end position="301"/>
    </location>
</feature>
<feature type="binding site" evidence="1">
    <location>
        <begin position="24"/>
        <end position="31"/>
    </location>
    <ligand>
        <name>ATP</name>
        <dbReference type="ChEBI" id="CHEBI:30616"/>
    </ligand>
</feature>
<feature type="binding site" evidence="1">
    <location>
        <begin position="75"/>
        <end position="78"/>
    </location>
    <ligand>
        <name>GTP</name>
        <dbReference type="ChEBI" id="CHEBI:37565"/>
    </ligand>
</feature>
<dbReference type="EMBL" id="AM408590">
    <property type="protein sequence ID" value="CAL71469.1"/>
    <property type="molecule type" value="Genomic_DNA"/>
</dbReference>
<dbReference type="SMR" id="A1KIL0"/>
<dbReference type="KEGG" id="mbb:BCG_1482"/>
<dbReference type="HOGENOM" id="CLU_059558_0_0_11"/>
<dbReference type="Proteomes" id="UP000001472">
    <property type="component" value="Chromosome"/>
</dbReference>
<dbReference type="GO" id="GO:0005524">
    <property type="term" value="F:ATP binding"/>
    <property type="evidence" value="ECO:0007669"/>
    <property type="project" value="UniProtKB-UniRule"/>
</dbReference>
<dbReference type="GO" id="GO:0005525">
    <property type="term" value="F:GTP binding"/>
    <property type="evidence" value="ECO:0007669"/>
    <property type="project" value="UniProtKB-UniRule"/>
</dbReference>
<dbReference type="HAMAP" id="MF_00636">
    <property type="entry name" value="RapZ_like"/>
    <property type="match status" value="1"/>
</dbReference>
<dbReference type="InterPro" id="IPR027417">
    <property type="entry name" value="P-loop_NTPase"/>
</dbReference>
<dbReference type="InterPro" id="IPR005337">
    <property type="entry name" value="RapZ-like"/>
</dbReference>
<dbReference type="InterPro" id="IPR053930">
    <property type="entry name" value="RapZ-like_N"/>
</dbReference>
<dbReference type="InterPro" id="IPR053931">
    <property type="entry name" value="RapZ_C"/>
</dbReference>
<dbReference type="NCBIfam" id="NF003828">
    <property type="entry name" value="PRK05416.1"/>
    <property type="match status" value="1"/>
</dbReference>
<dbReference type="PANTHER" id="PTHR30448">
    <property type="entry name" value="RNASE ADAPTER PROTEIN RAPZ"/>
    <property type="match status" value="1"/>
</dbReference>
<dbReference type="PANTHER" id="PTHR30448:SF0">
    <property type="entry name" value="RNASE ADAPTER PROTEIN RAPZ"/>
    <property type="match status" value="1"/>
</dbReference>
<dbReference type="Pfam" id="PF22740">
    <property type="entry name" value="PapZ_C"/>
    <property type="match status" value="1"/>
</dbReference>
<dbReference type="Pfam" id="PF03668">
    <property type="entry name" value="RapZ-like_N"/>
    <property type="match status" value="1"/>
</dbReference>
<dbReference type="PIRSF" id="PIRSF005052">
    <property type="entry name" value="P-loopkin"/>
    <property type="match status" value="1"/>
</dbReference>
<dbReference type="SUPFAM" id="SSF52540">
    <property type="entry name" value="P-loop containing nucleoside triphosphate hydrolases"/>
    <property type="match status" value="1"/>
</dbReference>
<reference key="1">
    <citation type="journal article" date="2007" name="Proc. Natl. Acad. Sci. U.S.A.">
        <title>Genome plasticity of BCG and impact on vaccine efficacy.</title>
        <authorList>
            <person name="Brosch R."/>
            <person name="Gordon S.V."/>
            <person name="Garnier T."/>
            <person name="Eiglmeier K."/>
            <person name="Frigui W."/>
            <person name="Valenti P."/>
            <person name="Dos Santos S."/>
            <person name="Duthoy S."/>
            <person name="Lacroix C."/>
            <person name="Garcia-Pelayo C."/>
            <person name="Inwald J.K."/>
            <person name="Golby P."/>
            <person name="Garcia J.N."/>
            <person name="Hewinson R.G."/>
            <person name="Behr M.A."/>
            <person name="Quail M.A."/>
            <person name="Churcher C."/>
            <person name="Barrell B.G."/>
            <person name="Parkhill J."/>
            <person name="Cole S.T."/>
        </authorList>
    </citation>
    <scope>NUCLEOTIDE SEQUENCE [LARGE SCALE GENOMIC DNA]</scope>
    <source>
        <strain>BCG / Pasteur 1173P2</strain>
    </source>
</reference>
<proteinExistence type="inferred from homology"/>
<gene>
    <name type="ordered locus">BCG_1482</name>
</gene>